<feature type="chain" id="PRO_0000231999" description="Phenylalanine--tRNA ligase alpha subunit">
    <location>
        <begin position="1"/>
        <end position="369"/>
    </location>
</feature>
<feature type="binding site" evidence="1">
    <location>
        <position position="269"/>
    </location>
    <ligand>
        <name>Mg(2+)</name>
        <dbReference type="ChEBI" id="CHEBI:18420"/>
        <note>shared with beta subunit</note>
    </ligand>
</feature>
<organism>
    <name type="scientific">Nitrobacter winogradskyi (strain ATCC 25391 / DSM 10237 / CIP 104748 / NCIMB 11846 / Nb-255)</name>
    <dbReference type="NCBI Taxonomy" id="323098"/>
    <lineage>
        <taxon>Bacteria</taxon>
        <taxon>Pseudomonadati</taxon>
        <taxon>Pseudomonadota</taxon>
        <taxon>Alphaproteobacteria</taxon>
        <taxon>Hyphomicrobiales</taxon>
        <taxon>Nitrobacteraceae</taxon>
        <taxon>Nitrobacter</taxon>
    </lineage>
</organism>
<comment type="catalytic activity">
    <reaction evidence="1">
        <text>tRNA(Phe) + L-phenylalanine + ATP = L-phenylalanyl-tRNA(Phe) + AMP + diphosphate + H(+)</text>
        <dbReference type="Rhea" id="RHEA:19413"/>
        <dbReference type="Rhea" id="RHEA-COMP:9668"/>
        <dbReference type="Rhea" id="RHEA-COMP:9699"/>
        <dbReference type="ChEBI" id="CHEBI:15378"/>
        <dbReference type="ChEBI" id="CHEBI:30616"/>
        <dbReference type="ChEBI" id="CHEBI:33019"/>
        <dbReference type="ChEBI" id="CHEBI:58095"/>
        <dbReference type="ChEBI" id="CHEBI:78442"/>
        <dbReference type="ChEBI" id="CHEBI:78531"/>
        <dbReference type="ChEBI" id="CHEBI:456215"/>
        <dbReference type="EC" id="6.1.1.20"/>
    </reaction>
</comment>
<comment type="cofactor">
    <cofactor evidence="1">
        <name>Mg(2+)</name>
        <dbReference type="ChEBI" id="CHEBI:18420"/>
    </cofactor>
    <text evidence="1">Binds 2 magnesium ions per tetramer.</text>
</comment>
<comment type="subunit">
    <text evidence="1">Tetramer of two alpha and two beta subunits.</text>
</comment>
<comment type="subcellular location">
    <subcellularLocation>
        <location evidence="1">Cytoplasm</location>
    </subcellularLocation>
</comment>
<comment type="similarity">
    <text evidence="1">Belongs to the class-II aminoacyl-tRNA synthetase family. Phe-tRNA synthetase alpha subunit type 1 subfamily.</text>
</comment>
<dbReference type="EC" id="6.1.1.20" evidence="1"/>
<dbReference type="EMBL" id="CP000115">
    <property type="protein sequence ID" value="ABA03334.1"/>
    <property type="molecule type" value="Genomic_DNA"/>
</dbReference>
<dbReference type="SMR" id="Q3SWK7"/>
<dbReference type="STRING" id="323098.Nwi_0066"/>
<dbReference type="KEGG" id="nwi:Nwi_0066"/>
<dbReference type="eggNOG" id="COG0016">
    <property type="taxonomic scope" value="Bacteria"/>
</dbReference>
<dbReference type="HOGENOM" id="CLU_025086_0_1_5"/>
<dbReference type="Proteomes" id="UP000002531">
    <property type="component" value="Chromosome"/>
</dbReference>
<dbReference type="GO" id="GO:0005737">
    <property type="term" value="C:cytoplasm"/>
    <property type="evidence" value="ECO:0007669"/>
    <property type="project" value="UniProtKB-SubCell"/>
</dbReference>
<dbReference type="GO" id="GO:0005524">
    <property type="term" value="F:ATP binding"/>
    <property type="evidence" value="ECO:0007669"/>
    <property type="project" value="UniProtKB-UniRule"/>
</dbReference>
<dbReference type="GO" id="GO:0000287">
    <property type="term" value="F:magnesium ion binding"/>
    <property type="evidence" value="ECO:0007669"/>
    <property type="project" value="UniProtKB-UniRule"/>
</dbReference>
<dbReference type="GO" id="GO:0004826">
    <property type="term" value="F:phenylalanine-tRNA ligase activity"/>
    <property type="evidence" value="ECO:0007669"/>
    <property type="project" value="UniProtKB-UniRule"/>
</dbReference>
<dbReference type="GO" id="GO:0000049">
    <property type="term" value="F:tRNA binding"/>
    <property type="evidence" value="ECO:0007669"/>
    <property type="project" value="InterPro"/>
</dbReference>
<dbReference type="GO" id="GO:0006432">
    <property type="term" value="P:phenylalanyl-tRNA aminoacylation"/>
    <property type="evidence" value="ECO:0007669"/>
    <property type="project" value="UniProtKB-UniRule"/>
</dbReference>
<dbReference type="CDD" id="cd00496">
    <property type="entry name" value="PheRS_alpha_core"/>
    <property type="match status" value="1"/>
</dbReference>
<dbReference type="FunFam" id="3.30.930.10:FF:000003">
    <property type="entry name" value="Phenylalanine--tRNA ligase alpha subunit"/>
    <property type="match status" value="1"/>
</dbReference>
<dbReference type="Gene3D" id="3.30.930.10">
    <property type="entry name" value="Bira Bifunctional Protein, Domain 2"/>
    <property type="match status" value="1"/>
</dbReference>
<dbReference type="HAMAP" id="MF_00281">
    <property type="entry name" value="Phe_tRNA_synth_alpha1"/>
    <property type="match status" value="1"/>
</dbReference>
<dbReference type="InterPro" id="IPR006195">
    <property type="entry name" value="aa-tRNA-synth_II"/>
</dbReference>
<dbReference type="InterPro" id="IPR045864">
    <property type="entry name" value="aa-tRNA-synth_II/BPL/LPL"/>
</dbReference>
<dbReference type="InterPro" id="IPR004529">
    <property type="entry name" value="Phe-tRNA-synth_IIc_asu"/>
</dbReference>
<dbReference type="InterPro" id="IPR004188">
    <property type="entry name" value="Phe-tRNA_ligase_II_N"/>
</dbReference>
<dbReference type="InterPro" id="IPR022911">
    <property type="entry name" value="Phe_tRNA_ligase_alpha1_bac"/>
</dbReference>
<dbReference type="InterPro" id="IPR002319">
    <property type="entry name" value="Phenylalanyl-tRNA_Synthase"/>
</dbReference>
<dbReference type="InterPro" id="IPR010978">
    <property type="entry name" value="tRNA-bd_arm"/>
</dbReference>
<dbReference type="NCBIfam" id="TIGR00468">
    <property type="entry name" value="pheS"/>
    <property type="match status" value="1"/>
</dbReference>
<dbReference type="PANTHER" id="PTHR11538:SF41">
    <property type="entry name" value="PHENYLALANINE--TRNA LIGASE, MITOCHONDRIAL"/>
    <property type="match status" value="1"/>
</dbReference>
<dbReference type="PANTHER" id="PTHR11538">
    <property type="entry name" value="PHENYLALANYL-TRNA SYNTHETASE"/>
    <property type="match status" value="1"/>
</dbReference>
<dbReference type="Pfam" id="PF02912">
    <property type="entry name" value="Phe_tRNA-synt_N"/>
    <property type="match status" value="1"/>
</dbReference>
<dbReference type="Pfam" id="PF01409">
    <property type="entry name" value="tRNA-synt_2d"/>
    <property type="match status" value="1"/>
</dbReference>
<dbReference type="SUPFAM" id="SSF55681">
    <property type="entry name" value="Class II aaRS and biotin synthetases"/>
    <property type="match status" value="1"/>
</dbReference>
<dbReference type="SUPFAM" id="SSF46589">
    <property type="entry name" value="tRNA-binding arm"/>
    <property type="match status" value="1"/>
</dbReference>
<dbReference type="PROSITE" id="PS50862">
    <property type="entry name" value="AA_TRNA_LIGASE_II"/>
    <property type="match status" value="1"/>
</dbReference>
<accession>Q3SWK7</accession>
<keyword id="KW-0030">Aminoacyl-tRNA synthetase</keyword>
<keyword id="KW-0067">ATP-binding</keyword>
<keyword id="KW-0963">Cytoplasm</keyword>
<keyword id="KW-0436">Ligase</keyword>
<keyword id="KW-0460">Magnesium</keyword>
<keyword id="KW-0479">Metal-binding</keyword>
<keyword id="KW-0547">Nucleotide-binding</keyword>
<keyword id="KW-0648">Protein biosynthesis</keyword>
<keyword id="KW-1185">Reference proteome</keyword>
<proteinExistence type="inferred from homology"/>
<gene>
    <name evidence="1" type="primary">pheS</name>
    <name type="ordered locus">Nwi_0066</name>
</gene>
<sequence>MTLCKWWRFMSDLDALQSNILADIANASDEAALEAVRVMALGKKGSISALLATLGKMSPDERKTEGAKINLAKDTVTRALAARREVLKALALDARLASETIDVTPPLRETPAEAGRIHPLSQVWDEVTTIFADMGFAVAEGPDIETDDYNFTRLNFPEGHPAREMHDTFYFNPKDDGSRLLLRTHTSPVQVRTMLSQKPPIRVICPGRTYRSDSDQTHTPMFHQVEGLVIDKSSHLGHLKWILHEFCKAFFEVDNVNMRFRPSFFPFTEPSLEVDIQCRRDKHEIRFGEGEDWLEILGCGMVHPNVLKLCGIDPEVYQGFAWGMGIDRITMLKYGIADLRQLFEGDVRWLTHYGFRPLEIPTLAGGLSS</sequence>
<reference key="1">
    <citation type="journal article" date="2006" name="Appl. Environ. Microbiol.">
        <title>Genome sequence of the chemolithoautotrophic nitrite-oxidizing bacterium Nitrobacter winogradskyi Nb-255.</title>
        <authorList>
            <person name="Starkenburg S.R."/>
            <person name="Chain P.S.G."/>
            <person name="Sayavedra-Soto L.A."/>
            <person name="Hauser L."/>
            <person name="Land M.L."/>
            <person name="Larimer F.W."/>
            <person name="Malfatti S.A."/>
            <person name="Klotz M.G."/>
            <person name="Bottomley P.J."/>
            <person name="Arp D.J."/>
            <person name="Hickey W.J."/>
        </authorList>
    </citation>
    <scope>NUCLEOTIDE SEQUENCE [LARGE SCALE GENOMIC DNA]</scope>
    <source>
        <strain>ATCC 25391 / DSM 10237 / CIP 104748 / NCIMB 11846 / Nb-255</strain>
    </source>
</reference>
<protein>
    <recommendedName>
        <fullName evidence="1">Phenylalanine--tRNA ligase alpha subunit</fullName>
        <ecNumber evidence="1">6.1.1.20</ecNumber>
    </recommendedName>
    <alternativeName>
        <fullName evidence="1">Phenylalanyl-tRNA synthetase alpha subunit</fullName>
        <shortName evidence="1">PheRS</shortName>
    </alternativeName>
</protein>
<evidence type="ECO:0000255" key="1">
    <source>
        <dbReference type="HAMAP-Rule" id="MF_00281"/>
    </source>
</evidence>
<name>SYFA_NITWN</name>